<reference key="1">
    <citation type="journal article" date="1995" name="Gene">
        <title>Structure and evolution of CyI cytoplasmic actin-encoding genes in the indirect- and direct-developing sea urchins Heliocidaris tuberculata and Heliocidaris erythrogramma.</title>
        <authorList>
            <person name="Hahn J.-H."/>
            <person name="Kissinger J.C."/>
            <person name="Raff R.A."/>
        </authorList>
    </citation>
    <scope>NUCLEOTIDE SEQUENCE [GENOMIC DNA]</scope>
</reference>
<proteinExistence type="inferred from homology"/>
<feature type="propeptide" id="PRO_0000000676" description="Removed in mature form" evidence="1">
    <location>
        <begin position="1"/>
        <end position="2"/>
    </location>
</feature>
<feature type="chain" id="PRO_0000000677" description="Actin CyI, cytoplasmic">
    <location>
        <begin position="3"/>
        <end position="376"/>
    </location>
</feature>
<feature type="modified residue" description="N-acetylaspartate" evidence="1">
    <location>
        <position position="3"/>
    </location>
</feature>
<accession>P69002</accession>
<accession>P53462</accession>
<keyword id="KW-0007">Acetylation</keyword>
<keyword id="KW-0067">ATP-binding</keyword>
<keyword id="KW-0963">Cytoplasm</keyword>
<keyword id="KW-0206">Cytoskeleton</keyword>
<keyword id="KW-0378">Hydrolase</keyword>
<keyword id="KW-0547">Nucleotide-binding</keyword>
<evidence type="ECO:0000250" key="1"/>
<evidence type="ECO:0000250" key="2">
    <source>
        <dbReference type="UniProtKB" id="P68137"/>
    </source>
</evidence>
<evidence type="ECO:0000305" key="3"/>
<sequence>MCDDDVAALVIDNGSGMVKAGFAGDDAPRAVFPSIVGRPRHQGVMVGMGQKDSYVGDEAQSKRGILTLKYPIEHGIVTNWDDMEKIWHHTFYNELRVAPEEHPVLLTEAPLNPKANREKMTQIMFETFNSPAMYVAIQAVLSLYASGRTTGIVFDSGDGVSHTVPIYEGYALPHAILRLDLAGRDLTDYLMKILTERGYSFTTTAEREIVRDIKEKLCYVALDFEQEMSTAASSSSLEKSYELPDGQVITIGNERFRAPESLFQPSFLGMESAGIHETTYNSIMKCDVDIRKDLYANTVLSGGSTMFPGIADRMQKEITALAPPTMKIKIIAPPERKYSVWIGGSILASLSTFQQMWISKQEYDESGPSIVHRKCF</sequence>
<comment type="function">
    <text>Actins are highly conserved proteins that are involved in various types of cell motility and are ubiquitously expressed in all eukaryotic cells.</text>
</comment>
<comment type="catalytic activity">
    <reaction evidence="2">
        <text>ATP + H2O = ADP + phosphate + H(+)</text>
        <dbReference type="Rhea" id="RHEA:13065"/>
        <dbReference type="ChEBI" id="CHEBI:15377"/>
        <dbReference type="ChEBI" id="CHEBI:15378"/>
        <dbReference type="ChEBI" id="CHEBI:30616"/>
        <dbReference type="ChEBI" id="CHEBI:43474"/>
        <dbReference type="ChEBI" id="CHEBI:456216"/>
    </reaction>
</comment>
<comment type="subcellular location">
    <subcellularLocation>
        <location>Cytoplasm</location>
        <location>Cytoskeleton</location>
    </subcellularLocation>
</comment>
<comment type="similarity">
    <text evidence="3">Belongs to the actin family.</text>
</comment>
<organism>
    <name type="scientific">Heliocidaris erythrogramma</name>
    <name type="common">Sea urchin</name>
    <dbReference type="NCBI Taxonomy" id="7634"/>
    <lineage>
        <taxon>Eukaryota</taxon>
        <taxon>Metazoa</taxon>
        <taxon>Echinodermata</taxon>
        <taxon>Eleutherozoa</taxon>
        <taxon>Echinozoa</taxon>
        <taxon>Echinoidea</taxon>
        <taxon>Euechinoidea</taxon>
        <taxon>Echinacea</taxon>
        <taxon>Camarodonta</taxon>
        <taxon>Echinidea</taxon>
        <taxon>Echinometridae</taxon>
        <taxon>Heliocidaris</taxon>
    </lineage>
</organism>
<name>ACT1_HELER</name>
<dbReference type="EC" id="3.6.4.-" evidence="2"/>
<dbReference type="EMBL" id="U12271">
    <property type="protein sequence ID" value="AAA96348.1"/>
    <property type="molecule type" value="Genomic_DNA"/>
</dbReference>
<dbReference type="EMBL" id="U09635">
    <property type="protein sequence ID" value="AAA96348.1"/>
    <property type="status" value="JOINED"/>
    <property type="molecule type" value="Genomic_DNA"/>
</dbReference>
<dbReference type="SMR" id="P69002"/>
<dbReference type="GO" id="GO:0005737">
    <property type="term" value="C:cytoplasm"/>
    <property type="evidence" value="ECO:0007669"/>
    <property type="project" value="UniProtKB-KW"/>
</dbReference>
<dbReference type="GO" id="GO:0005856">
    <property type="term" value="C:cytoskeleton"/>
    <property type="evidence" value="ECO:0007669"/>
    <property type="project" value="UniProtKB-SubCell"/>
</dbReference>
<dbReference type="GO" id="GO:0005524">
    <property type="term" value="F:ATP binding"/>
    <property type="evidence" value="ECO:0007669"/>
    <property type="project" value="UniProtKB-KW"/>
</dbReference>
<dbReference type="GO" id="GO:0016787">
    <property type="term" value="F:hydrolase activity"/>
    <property type="evidence" value="ECO:0007669"/>
    <property type="project" value="UniProtKB-KW"/>
</dbReference>
<dbReference type="CDD" id="cd10224">
    <property type="entry name" value="ASKHA_NBD_actin"/>
    <property type="match status" value="1"/>
</dbReference>
<dbReference type="FunFam" id="2.30.36.70:FF:000001">
    <property type="entry name" value="Actin, alpha skeletal muscle"/>
    <property type="match status" value="1"/>
</dbReference>
<dbReference type="FunFam" id="3.30.420.40:FF:000131">
    <property type="entry name" value="Actin, alpha skeletal muscle"/>
    <property type="match status" value="1"/>
</dbReference>
<dbReference type="FunFam" id="3.30.420.40:FF:000291">
    <property type="entry name" value="Actin, alpha skeletal muscle"/>
    <property type="match status" value="1"/>
</dbReference>
<dbReference type="FunFam" id="3.90.640.10:FF:000047">
    <property type="entry name" value="Actin, alpha skeletal muscle"/>
    <property type="match status" value="1"/>
</dbReference>
<dbReference type="FunFam" id="3.30.420.40:FF:000058">
    <property type="entry name" value="Putative actin-related protein 5"/>
    <property type="match status" value="1"/>
</dbReference>
<dbReference type="Gene3D" id="3.30.420.40">
    <property type="match status" value="2"/>
</dbReference>
<dbReference type="Gene3D" id="3.90.640.10">
    <property type="entry name" value="Actin, Chain A, domain 4"/>
    <property type="match status" value="1"/>
</dbReference>
<dbReference type="InterPro" id="IPR004000">
    <property type="entry name" value="Actin"/>
</dbReference>
<dbReference type="InterPro" id="IPR020902">
    <property type="entry name" value="Actin/actin-like_CS"/>
</dbReference>
<dbReference type="InterPro" id="IPR004001">
    <property type="entry name" value="Actin_CS"/>
</dbReference>
<dbReference type="InterPro" id="IPR043129">
    <property type="entry name" value="ATPase_NBD"/>
</dbReference>
<dbReference type="PANTHER" id="PTHR11937">
    <property type="entry name" value="ACTIN"/>
    <property type="match status" value="1"/>
</dbReference>
<dbReference type="Pfam" id="PF00022">
    <property type="entry name" value="Actin"/>
    <property type="match status" value="1"/>
</dbReference>
<dbReference type="PRINTS" id="PR00190">
    <property type="entry name" value="ACTIN"/>
</dbReference>
<dbReference type="SMART" id="SM00268">
    <property type="entry name" value="ACTIN"/>
    <property type="match status" value="1"/>
</dbReference>
<dbReference type="SUPFAM" id="SSF53067">
    <property type="entry name" value="Actin-like ATPase domain"/>
    <property type="match status" value="2"/>
</dbReference>
<dbReference type="PROSITE" id="PS00406">
    <property type="entry name" value="ACTINS_1"/>
    <property type="match status" value="1"/>
</dbReference>
<dbReference type="PROSITE" id="PS00432">
    <property type="entry name" value="ACTINS_2"/>
    <property type="match status" value="1"/>
</dbReference>
<dbReference type="PROSITE" id="PS01132">
    <property type="entry name" value="ACTINS_ACT_LIKE"/>
    <property type="match status" value="1"/>
</dbReference>
<protein>
    <recommendedName>
        <fullName>Actin CyI, cytoplasmic</fullName>
        <ecNumber evidence="2">3.6.4.-</ecNumber>
    </recommendedName>
</protein>